<comment type="function">
    <text evidence="1">Catalyzes the rearrangement of 1-deoxy-D-xylulose 5-phosphate (DXP) to produce the thiazole phosphate moiety of thiamine. Sulfur is provided by the thiocarboxylate moiety of the carrier protein ThiS. In vitro, sulfur can be provided by H(2)S.</text>
</comment>
<comment type="catalytic activity">
    <reaction evidence="1">
        <text>[ThiS sulfur-carrier protein]-C-terminal-Gly-aminoethanethioate + 2-iminoacetate + 1-deoxy-D-xylulose 5-phosphate = [ThiS sulfur-carrier protein]-C-terminal Gly-Gly + 2-[(2R,5Z)-2-carboxy-4-methylthiazol-5(2H)-ylidene]ethyl phosphate + 2 H2O + H(+)</text>
        <dbReference type="Rhea" id="RHEA:26297"/>
        <dbReference type="Rhea" id="RHEA-COMP:12909"/>
        <dbReference type="Rhea" id="RHEA-COMP:19908"/>
        <dbReference type="ChEBI" id="CHEBI:15377"/>
        <dbReference type="ChEBI" id="CHEBI:15378"/>
        <dbReference type="ChEBI" id="CHEBI:57792"/>
        <dbReference type="ChEBI" id="CHEBI:62899"/>
        <dbReference type="ChEBI" id="CHEBI:77846"/>
        <dbReference type="ChEBI" id="CHEBI:90778"/>
        <dbReference type="ChEBI" id="CHEBI:232372"/>
        <dbReference type="EC" id="2.8.1.10"/>
    </reaction>
</comment>
<comment type="pathway">
    <text evidence="1">Cofactor biosynthesis; thiamine diphosphate biosynthesis.</text>
</comment>
<comment type="subunit">
    <text evidence="1">Homotetramer. Forms heterodimers with either ThiH or ThiS.</text>
</comment>
<comment type="subcellular location">
    <subcellularLocation>
        <location evidence="1">Cytoplasm</location>
    </subcellularLocation>
</comment>
<comment type="similarity">
    <text evidence="1">Belongs to the ThiG family.</text>
</comment>
<name>THIG_CUPPJ</name>
<dbReference type="EC" id="2.8.1.10" evidence="1"/>
<dbReference type="EMBL" id="CP000090">
    <property type="protein sequence ID" value="AAZ59590.1"/>
    <property type="molecule type" value="Genomic_DNA"/>
</dbReference>
<dbReference type="SMR" id="Q476U3"/>
<dbReference type="STRING" id="264198.Reut_A0208"/>
<dbReference type="KEGG" id="reu:Reut_A0208"/>
<dbReference type="eggNOG" id="COG2022">
    <property type="taxonomic scope" value="Bacteria"/>
</dbReference>
<dbReference type="HOGENOM" id="CLU_062233_1_0_4"/>
<dbReference type="OrthoDB" id="9805935at2"/>
<dbReference type="UniPathway" id="UPA00060"/>
<dbReference type="GO" id="GO:0005737">
    <property type="term" value="C:cytoplasm"/>
    <property type="evidence" value="ECO:0007669"/>
    <property type="project" value="UniProtKB-SubCell"/>
</dbReference>
<dbReference type="GO" id="GO:1990107">
    <property type="term" value="F:thiazole synthase activity"/>
    <property type="evidence" value="ECO:0007669"/>
    <property type="project" value="UniProtKB-EC"/>
</dbReference>
<dbReference type="GO" id="GO:0009229">
    <property type="term" value="P:thiamine diphosphate biosynthetic process"/>
    <property type="evidence" value="ECO:0007669"/>
    <property type="project" value="UniProtKB-UniRule"/>
</dbReference>
<dbReference type="CDD" id="cd04728">
    <property type="entry name" value="ThiG"/>
    <property type="match status" value="1"/>
</dbReference>
<dbReference type="Gene3D" id="3.20.20.70">
    <property type="entry name" value="Aldolase class I"/>
    <property type="match status" value="1"/>
</dbReference>
<dbReference type="HAMAP" id="MF_00443">
    <property type="entry name" value="ThiG"/>
    <property type="match status" value="1"/>
</dbReference>
<dbReference type="InterPro" id="IPR013785">
    <property type="entry name" value="Aldolase_TIM"/>
</dbReference>
<dbReference type="InterPro" id="IPR033983">
    <property type="entry name" value="Thiazole_synthase_ThiG"/>
</dbReference>
<dbReference type="InterPro" id="IPR008867">
    <property type="entry name" value="ThiG"/>
</dbReference>
<dbReference type="PANTHER" id="PTHR34266">
    <property type="entry name" value="THIAZOLE SYNTHASE"/>
    <property type="match status" value="1"/>
</dbReference>
<dbReference type="PANTHER" id="PTHR34266:SF2">
    <property type="entry name" value="THIAZOLE SYNTHASE"/>
    <property type="match status" value="1"/>
</dbReference>
<dbReference type="Pfam" id="PF05690">
    <property type="entry name" value="ThiG"/>
    <property type="match status" value="1"/>
</dbReference>
<dbReference type="SUPFAM" id="SSF110399">
    <property type="entry name" value="ThiG-like"/>
    <property type="match status" value="1"/>
</dbReference>
<protein>
    <recommendedName>
        <fullName evidence="1">Thiazole synthase</fullName>
        <ecNumber evidence="1">2.8.1.10</ecNumber>
    </recommendedName>
</protein>
<evidence type="ECO:0000255" key="1">
    <source>
        <dbReference type="HAMAP-Rule" id="MF_00443"/>
    </source>
</evidence>
<proteinExistence type="inferred from homology"/>
<accession>Q476U3</accession>
<keyword id="KW-0963">Cytoplasm</keyword>
<keyword id="KW-0704">Schiff base</keyword>
<keyword id="KW-0784">Thiamine biosynthesis</keyword>
<keyword id="KW-0808">Transferase</keyword>
<gene>
    <name evidence="1" type="primary">thiG</name>
    <name type="ordered locus">Reut_A0208</name>
</gene>
<reference key="1">
    <citation type="journal article" date="2010" name="PLoS ONE">
        <title>The complete multipartite genome sequence of Cupriavidus necator JMP134, a versatile pollutant degrader.</title>
        <authorList>
            <person name="Lykidis A."/>
            <person name="Perez-Pantoja D."/>
            <person name="Ledger T."/>
            <person name="Mavromatis K."/>
            <person name="Anderson I.J."/>
            <person name="Ivanova N.N."/>
            <person name="Hooper S.D."/>
            <person name="Lapidus A."/>
            <person name="Lucas S."/>
            <person name="Gonzalez B."/>
            <person name="Kyrpides N.C."/>
        </authorList>
    </citation>
    <scope>NUCLEOTIDE SEQUENCE [LARGE SCALE GENOMIC DNA]</scope>
    <source>
        <strain>JMP134 / LMG 1197</strain>
    </source>
</reference>
<feature type="chain" id="PRO_0000236361" description="Thiazole synthase">
    <location>
        <begin position="1"/>
        <end position="278"/>
    </location>
</feature>
<feature type="active site" description="Schiff-base intermediate with DXP" evidence="1">
    <location>
        <position position="109"/>
    </location>
</feature>
<feature type="binding site" evidence="1">
    <location>
        <position position="170"/>
    </location>
    <ligand>
        <name>1-deoxy-D-xylulose 5-phosphate</name>
        <dbReference type="ChEBI" id="CHEBI:57792"/>
    </ligand>
</feature>
<feature type="binding site" evidence="1">
    <location>
        <begin position="197"/>
        <end position="198"/>
    </location>
    <ligand>
        <name>1-deoxy-D-xylulose 5-phosphate</name>
        <dbReference type="ChEBI" id="CHEBI:57792"/>
    </ligand>
</feature>
<feature type="binding site" evidence="1">
    <location>
        <begin position="219"/>
        <end position="220"/>
    </location>
    <ligand>
        <name>1-deoxy-D-xylulose 5-phosphate</name>
        <dbReference type="ChEBI" id="CHEBI:57792"/>
    </ligand>
</feature>
<organism>
    <name type="scientific">Cupriavidus pinatubonensis (strain JMP 134 / LMG 1197)</name>
    <name type="common">Cupriavidus necator (strain JMP 134)</name>
    <dbReference type="NCBI Taxonomy" id="264198"/>
    <lineage>
        <taxon>Bacteria</taxon>
        <taxon>Pseudomonadati</taxon>
        <taxon>Pseudomonadota</taxon>
        <taxon>Betaproteobacteria</taxon>
        <taxon>Burkholderiales</taxon>
        <taxon>Burkholderiaceae</taxon>
        <taxon>Cupriavidus</taxon>
    </lineage>
</organism>
<sequence length="278" mass="30203">MTFEPTETLRDPFVLYGESFDSRLLLGTARYPSPATLQAAVEISRPAMVTVALRRQGAVGEGEGGQAFWQMLKALGVPVLPNTAGCFTPQEVVNTAMMAREVFETDWIKLELIGDDYTLQPDTLNLPDVAETLIKEGFKVLPYCTEDLVLCRRLLDVGCQALMPWAAPIGTGRGAINPHAMRVLRERLPDTPLIVDAGLGLPSHAAQVLEWGYDGVLLNTAVAQAAYPVNMARAFAQAVEAGRTAYLAGPMPEREVAQASTPVVGMPFWHAENTEHRA</sequence>